<evidence type="ECO:0000255" key="1">
    <source>
        <dbReference type="HAMAP-Rule" id="MF_00137"/>
    </source>
</evidence>
<reference key="1">
    <citation type="journal article" date="2007" name="Genome Biol.">
        <title>Characterization and modeling of the Haemophilus influenzae core and supragenomes based on the complete genomic sequences of Rd and 12 clinical nontypeable strains.</title>
        <authorList>
            <person name="Hogg J.S."/>
            <person name="Hu F.Z."/>
            <person name="Janto B."/>
            <person name="Boissy R."/>
            <person name="Hayes J."/>
            <person name="Keefe R."/>
            <person name="Post J.C."/>
            <person name="Ehrlich G.D."/>
        </authorList>
    </citation>
    <scope>NUCLEOTIDE SEQUENCE [LARGE SCALE GENOMIC DNA]</scope>
    <source>
        <strain>PittGG</strain>
    </source>
</reference>
<accession>A5UFF7</accession>
<gene>
    <name evidence="1" type="primary">purC</name>
    <name type="ordered locus">CGSHiGG_02365</name>
</gene>
<sequence>MTQQLPILSLKKIYSGKVRDLYEIDDKRMLMVASDRLSAFDVILDDPIPRKGEILTQISNFWFNKLAHIMPNHFTGDSVYDVLPKEEADLIRDRAVVCKRLNPIKIESIVRGYLTGSGLKDYKQTGTICGLKLPEGLVEASKLPEAIFTPSSKEEVGNHDINISYAECEKLIGADLAAQVKEKAIALYTVAAEYALTKGIIICDTKFEFGLDENGTLTLMDEVLTPDSSRFWSVDTYQAGTNPPSFDKQFVRDWLENSGWNKQAPVPKVPENIIQKTVDKYQEALDLLTK</sequence>
<comment type="catalytic activity">
    <reaction evidence="1">
        <text>5-amino-1-(5-phospho-D-ribosyl)imidazole-4-carboxylate + L-aspartate + ATP = (2S)-2-[5-amino-1-(5-phospho-beta-D-ribosyl)imidazole-4-carboxamido]succinate + ADP + phosphate + 2 H(+)</text>
        <dbReference type="Rhea" id="RHEA:22628"/>
        <dbReference type="ChEBI" id="CHEBI:15378"/>
        <dbReference type="ChEBI" id="CHEBI:29991"/>
        <dbReference type="ChEBI" id="CHEBI:30616"/>
        <dbReference type="ChEBI" id="CHEBI:43474"/>
        <dbReference type="ChEBI" id="CHEBI:58443"/>
        <dbReference type="ChEBI" id="CHEBI:77657"/>
        <dbReference type="ChEBI" id="CHEBI:456216"/>
        <dbReference type="EC" id="6.3.2.6"/>
    </reaction>
</comment>
<comment type="pathway">
    <text evidence="1">Purine metabolism; IMP biosynthesis via de novo pathway; 5-amino-1-(5-phospho-D-ribosyl)imidazole-4-carboxamide from 5-amino-1-(5-phospho-D-ribosyl)imidazole-4-carboxylate: step 1/2.</text>
</comment>
<comment type="similarity">
    <text evidence="1">Belongs to the SAICAR synthetase family.</text>
</comment>
<organism>
    <name type="scientific">Haemophilus influenzae (strain PittGG)</name>
    <dbReference type="NCBI Taxonomy" id="374931"/>
    <lineage>
        <taxon>Bacteria</taxon>
        <taxon>Pseudomonadati</taxon>
        <taxon>Pseudomonadota</taxon>
        <taxon>Gammaproteobacteria</taxon>
        <taxon>Pasteurellales</taxon>
        <taxon>Pasteurellaceae</taxon>
        <taxon>Haemophilus</taxon>
    </lineage>
</organism>
<dbReference type="EC" id="6.3.2.6" evidence="1"/>
<dbReference type="EMBL" id="CP000672">
    <property type="protein sequence ID" value="ABQ99512.1"/>
    <property type="molecule type" value="Genomic_DNA"/>
</dbReference>
<dbReference type="SMR" id="A5UFF7"/>
<dbReference type="KEGG" id="hiq:CGSHiGG_02365"/>
<dbReference type="HOGENOM" id="CLU_045637_0_2_6"/>
<dbReference type="UniPathway" id="UPA00074">
    <property type="reaction ID" value="UER00131"/>
</dbReference>
<dbReference type="Proteomes" id="UP000001990">
    <property type="component" value="Chromosome"/>
</dbReference>
<dbReference type="GO" id="GO:0005737">
    <property type="term" value="C:cytoplasm"/>
    <property type="evidence" value="ECO:0007669"/>
    <property type="project" value="TreeGrafter"/>
</dbReference>
<dbReference type="GO" id="GO:0005524">
    <property type="term" value="F:ATP binding"/>
    <property type="evidence" value="ECO:0007669"/>
    <property type="project" value="UniProtKB-KW"/>
</dbReference>
<dbReference type="GO" id="GO:0004639">
    <property type="term" value="F:phosphoribosylaminoimidazolesuccinocarboxamide synthase activity"/>
    <property type="evidence" value="ECO:0007669"/>
    <property type="project" value="UniProtKB-UniRule"/>
</dbReference>
<dbReference type="GO" id="GO:0006189">
    <property type="term" value="P:'de novo' IMP biosynthetic process"/>
    <property type="evidence" value="ECO:0007669"/>
    <property type="project" value="UniProtKB-UniRule"/>
</dbReference>
<dbReference type="CDD" id="cd01414">
    <property type="entry name" value="SAICAR_synt_Sc"/>
    <property type="match status" value="1"/>
</dbReference>
<dbReference type="FunFam" id="3.30.200.20:FF:000365">
    <property type="entry name" value="Phosphoribosylaminoimidazole-succinocarboxamide synthase"/>
    <property type="match status" value="1"/>
</dbReference>
<dbReference type="FunFam" id="3.30.470.20:FF:000015">
    <property type="entry name" value="Phosphoribosylaminoimidazole-succinocarboxamide synthase"/>
    <property type="match status" value="1"/>
</dbReference>
<dbReference type="Gene3D" id="3.30.470.20">
    <property type="entry name" value="ATP-grasp fold, B domain"/>
    <property type="match status" value="1"/>
</dbReference>
<dbReference type="Gene3D" id="3.30.200.20">
    <property type="entry name" value="Phosphorylase Kinase, domain 1"/>
    <property type="match status" value="1"/>
</dbReference>
<dbReference type="HAMAP" id="MF_00137">
    <property type="entry name" value="SAICAR_synth"/>
    <property type="match status" value="1"/>
</dbReference>
<dbReference type="InterPro" id="IPR028923">
    <property type="entry name" value="SAICAR_synt/ADE2_N"/>
</dbReference>
<dbReference type="InterPro" id="IPR001636">
    <property type="entry name" value="SAICAR_synth"/>
</dbReference>
<dbReference type="InterPro" id="IPR018236">
    <property type="entry name" value="SAICAR_synthetase_CS"/>
</dbReference>
<dbReference type="NCBIfam" id="NF010568">
    <property type="entry name" value="PRK13961.1"/>
    <property type="match status" value="1"/>
</dbReference>
<dbReference type="NCBIfam" id="TIGR00081">
    <property type="entry name" value="purC"/>
    <property type="match status" value="1"/>
</dbReference>
<dbReference type="PANTHER" id="PTHR43700">
    <property type="entry name" value="PHOSPHORIBOSYLAMINOIMIDAZOLE-SUCCINOCARBOXAMIDE SYNTHASE"/>
    <property type="match status" value="1"/>
</dbReference>
<dbReference type="PANTHER" id="PTHR43700:SF1">
    <property type="entry name" value="PHOSPHORIBOSYLAMINOIMIDAZOLE-SUCCINOCARBOXAMIDE SYNTHASE"/>
    <property type="match status" value="1"/>
</dbReference>
<dbReference type="Pfam" id="PF01259">
    <property type="entry name" value="SAICAR_synt"/>
    <property type="match status" value="1"/>
</dbReference>
<dbReference type="SUPFAM" id="SSF56104">
    <property type="entry name" value="SAICAR synthase-like"/>
    <property type="match status" value="1"/>
</dbReference>
<dbReference type="PROSITE" id="PS01057">
    <property type="entry name" value="SAICAR_SYNTHETASE_1"/>
    <property type="match status" value="1"/>
</dbReference>
<dbReference type="PROSITE" id="PS01058">
    <property type="entry name" value="SAICAR_SYNTHETASE_2"/>
    <property type="match status" value="1"/>
</dbReference>
<keyword id="KW-0067">ATP-binding</keyword>
<keyword id="KW-0436">Ligase</keyword>
<keyword id="KW-0547">Nucleotide-binding</keyword>
<keyword id="KW-0658">Purine biosynthesis</keyword>
<feature type="chain" id="PRO_1000018711" description="Phosphoribosylaminoimidazole-succinocarboxamide synthase">
    <location>
        <begin position="1"/>
        <end position="290"/>
    </location>
</feature>
<proteinExistence type="inferred from homology"/>
<name>PUR7_HAEIG</name>
<protein>
    <recommendedName>
        <fullName evidence="1">Phosphoribosylaminoimidazole-succinocarboxamide synthase</fullName>
        <ecNumber evidence="1">6.3.2.6</ecNumber>
    </recommendedName>
    <alternativeName>
        <fullName evidence="1">SAICAR synthetase</fullName>
    </alternativeName>
</protein>